<reference key="1">
    <citation type="journal article" date="2006" name="BMC Genomics">
        <title>The genome of the square archaeon Haloquadratum walsbyi: life at the limits of water activity.</title>
        <authorList>
            <person name="Bolhuis H."/>
            <person name="Palm P."/>
            <person name="Wende A."/>
            <person name="Falb M."/>
            <person name="Rampp M."/>
            <person name="Rodriguez-Valera F."/>
            <person name="Pfeiffer F."/>
            <person name="Oesterhelt D."/>
        </authorList>
    </citation>
    <scope>NUCLEOTIDE SEQUENCE [LARGE SCALE GENOMIC DNA]</scope>
    <source>
        <strain>DSM 16790 / HBSQ001</strain>
    </source>
</reference>
<organism>
    <name type="scientific">Haloquadratum walsbyi (strain DSM 16790 / HBSQ001)</name>
    <dbReference type="NCBI Taxonomy" id="362976"/>
    <lineage>
        <taxon>Archaea</taxon>
        <taxon>Methanobacteriati</taxon>
        <taxon>Methanobacteriota</taxon>
        <taxon>Stenosarchaea group</taxon>
        <taxon>Halobacteria</taxon>
        <taxon>Halobacteriales</taxon>
        <taxon>Haloferacaceae</taxon>
        <taxon>Haloquadratum</taxon>
    </lineage>
</organism>
<keyword id="KW-0963">Cytoplasm</keyword>
<keyword id="KW-0489">Methyltransferase</keyword>
<keyword id="KW-1185">Reference proteome</keyword>
<keyword id="KW-0698">rRNA processing</keyword>
<keyword id="KW-0949">S-adenosyl-L-methionine</keyword>
<keyword id="KW-0808">Transferase</keyword>
<accession>Q18E61</accession>
<protein>
    <recommendedName>
        <fullName evidence="1">Ribosomal RNA large subunit methyltransferase E</fullName>
        <ecNumber evidence="1">2.1.1.166</ecNumber>
    </recommendedName>
    <alternativeName>
        <fullName evidence="1">23S rRNA Um2552 methyltransferase</fullName>
    </alternativeName>
    <alternativeName>
        <fullName evidence="1">rRNA (uridine-2'-O-)-methyltransferase</fullName>
    </alternativeName>
</protein>
<comment type="function">
    <text evidence="1">Specifically methylates the uridine in position 2552 of 23S rRNA at the 2'-O position of the ribose in the fully assembled 50S ribosomal subunit.</text>
</comment>
<comment type="catalytic activity">
    <reaction evidence="1">
        <text>uridine(2552) in 23S rRNA + S-adenosyl-L-methionine = 2'-O-methyluridine(2552) in 23S rRNA + S-adenosyl-L-homocysteine + H(+)</text>
        <dbReference type="Rhea" id="RHEA:42720"/>
        <dbReference type="Rhea" id="RHEA-COMP:10202"/>
        <dbReference type="Rhea" id="RHEA-COMP:10203"/>
        <dbReference type="ChEBI" id="CHEBI:15378"/>
        <dbReference type="ChEBI" id="CHEBI:57856"/>
        <dbReference type="ChEBI" id="CHEBI:59789"/>
        <dbReference type="ChEBI" id="CHEBI:65315"/>
        <dbReference type="ChEBI" id="CHEBI:74478"/>
        <dbReference type="EC" id="2.1.1.166"/>
    </reaction>
</comment>
<comment type="subcellular location">
    <subcellularLocation>
        <location evidence="1">Cytoplasm</location>
    </subcellularLocation>
</comment>
<comment type="similarity">
    <text evidence="1">Belongs to the class I-like SAM-binding methyltransferase superfamily. RNA methyltransferase RlmE family.</text>
</comment>
<gene>
    <name evidence="1" type="primary">rlmE</name>
    <name evidence="1" type="synonym">rrmJ</name>
    <name type="ordered locus">HQ_3685A</name>
</gene>
<feature type="chain" id="PRO_0000282817" description="Ribosomal RNA large subunit methyltransferase E">
    <location>
        <begin position="1"/>
        <end position="256"/>
    </location>
</feature>
<feature type="domain" description="TRAM" evidence="1">
    <location>
        <begin position="198"/>
        <end position="256"/>
    </location>
</feature>
<feature type="active site" description="Proton acceptor" evidence="1">
    <location>
        <position position="151"/>
    </location>
</feature>
<feature type="binding site" evidence="1">
    <location>
        <position position="48"/>
    </location>
    <ligand>
        <name>S-adenosyl-L-methionine</name>
        <dbReference type="ChEBI" id="CHEBI:59789"/>
    </ligand>
</feature>
<feature type="binding site" evidence="1">
    <location>
        <position position="50"/>
    </location>
    <ligand>
        <name>S-adenosyl-L-methionine</name>
        <dbReference type="ChEBI" id="CHEBI:59789"/>
    </ligand>
</feature>
<feature type="binding site" evidence="1">
    <location>
        <position position="68"/>
    </location>
    <ligand>
        <name>S-adenosyl-L-methionine</name>
        <dbReference type="ChEBI" id="CHEBI:59789"/>
    </ligand>
</feature>
<feature type="binding site" evidence="1">
    <location>
        <position position="86"/>
    </location>
    <ligand>
        <name>S-adenosyl-L-methionine</name>
        <dbReference type="ChEBI" id="CHEBI:59789"/>
    </ligand>
</feature>
<feature type="binding site" evidence="1">
    <location>
        <position position="111"/>
    </location>
    <ligand>
        <name>S-adenosyl-L-methionine</name>
        <dbReference type="ChEBI" id="CHEBI:59789"/>
    </ligand>
</feature>
<name>RLME_HALWD</name>
<proteinExistence type="inferred from homology"/>
<sequence length="256" mass="27724">MTGRDEYYNRAKQEGYRTRSAYKLQQIDADAGVFGPGNTVIDLGAAPGGWLQVAAEAVGPSGTVIGVDFQRIRDLESDIVDTIRGDMTDESTKNALRKRVNNSSVNVVLSDMAPNMTGEYSVDHARSVHLARQAFSVATDILPAGGDFIVKVFDGRDLADFRQDVDTEFEYVKSIRPDASRDSSSEQYLVGKHRITAPVSPGDELDATVVDIGSEGDGIIKIDGYTLFVPGVENGDSVRVRVTDLKSNVGFAEVIE</sequence>
<dbReference type="EC" id="2.1.1.166" evidence="1"/>
<dbReference type="EMBL" id="AM180088">
    <property type="protein sequence ID" value="CAJ53772.1"/>
    <property type="molecule type" value="Genomic_DNA"/>
</dbReference>
<dbReference type="RefSeq" id="WP_011572854.1">
    <property type="nucleotide sequence ID" value="NC_008212.1"/>
</dbReference>
<dbReference type="SMR" id="Q18E61"/>
<dbReference type="STRING" id="362976.HQ_3685A"/>
<dbReference type="GeneID" id="4193996"/>
<dbReference type="KEGG" id="hwa:HQ_3685A"/>
<dbReference type="eggNOG" id="arCOG00079">
    <property type="taxonomic scope" value="Archaea"/>
</dbReference>
<dbReference type="HOGENOM" id="CLU_009422_4_4_2"/>
<dbReference type="Proteomes" id="UP000001975">
    <property type="component" value="Chromosome"/>
</dbReference>
<dbReference type="GO" id="GO:0005737">
    <property type="term" value="C:cytoplasm"/>
    <property type="evidence" value="ECO:0007669"/>
    <property type="project" value="UniProtKB-SubCell"/>
</dbReference>
<dbReference type="GO" id="GO:0008650">
    <property type="term" value="F:rRNA (uridine-2'-O-)-methyltransferase activity"/>
    <property type="evidence" value="ECO:0007669"/>
    <property type="project" value="UniProtKB-UniRule"/>
</dbReference>
<dbReference type="Gene3D" id="2.40.50.140">
    <property type="entry name" value="Nucleic acid-binding proteins"/>
    <property type="match status" value="1"/>
</dbReference>
<dbReference type="Gene3D" id="3.40.50.150">
    <property type="entry name" value="Vaccinia Virus protein VP39"/>
    <property type="match status" value="1"/>
</dbReference>
<dbReference type="HAMAP" id="MF_01547">
    <property type="entry name" value="RNA_methyltr_E"/>
    <property type="match status" value="1"/>
</dbReference>
<dbReference type="InterPro" id="IPR012340">
    <property type="entry name" value="NA-bd_OB-fold"/>
</dbReference>
<dbReference type="InterPro" id="IPR050082">
    <property type="entry name" value="RNA_methyltr_RlmE"/>
</dbReference>
<dbReference type="InterPro" id="IPR002877">
    <property type="entry name" value="RNA_MeTrfase_FtsJ_dom"/>
</dbReference>
<dbReference type="InterPro" id="IPR015507">
    <property type="entry name" value="rRNA-MeTfrase_E"/>
</dbReference>
<dbReference type="InterPro" id="IPR029063">
    <property type="entry name" value="SAM-dependent_MTases_sf"/>
</dbReference>
<dbReference type="InterPro" id="IPR002792">
    <property type="entry name" value="TRAM_dom"/>
</dbReference>
<dbReference type="PANTHER" id="PTHR10920:SF13">
    <property type="entry name" value="PRE-RRNA 2'-O-RIBOSE RNA METHYLTRANSFERASE FTSJ3"/>
    <property type="match status" value="1"/>
</dbReference>
<dbReference type="PANTHER" id="PTHR10920">
    <property type="entry name" value="RIBOSOMAL RNA METHYLTRANSFERASE"/>
    <property type="match status" value="1"/>
</dbReference>
<dbReference type="Pfam" id="PF01728">
    <property type="entry name" value="FtsJ"/>
    <property type="match status" value="1"/>
</dbReference>
<dbReference type="Pfam" id="PF01938">
    <property type="entry name" value="TRAM"/>
    <property type="match status" value="1"/>
</dbReference>
<dbReference type="SUPFAM" id="SSF50249">
    <property type="entry name" value="Nucleic acid-binding proteins"/>
    <property type="match status" value="1"/>
</dbReference>
<dbReference type="SUPFAM" id="SSF53335">
    <property type="entry name" value="S-adenosyl-L-methionine-dependent methyltransferases"/>
    <property type="match status" value="1"/>
</dbReference>
<dbReference type="PROSITE" id="PS50926">
    <property type="entry name" value="TRAM"/>
    <property type="match status" value="1"/>
</dbReference>
<evidence type="ECO:0000255" key="1">
    <source>
        <dbReference type="HAMAP-Rule" id="MF_01547"/>
    </source>
</evidence>